<organism>
    <name type="scientific">Bacteroides fragilis (strain ATCC 25285 / DSM 2151 / CCUG 4856 / JCM 11019 / LMG 10263 / NCTC 9343 / Onslow / VPI 2553 / EN-2)</name>
    <dbReference type="NCBI Taxonomy" id="272559"/>
    <lineage>
        <taxon>Bacteria</taxon>
        <taxon>Pseudomonadati</taxon>
        <taxon>Bacteroidota</taxon>
        <taxon>Bacteroidia</taxon>
        <taxon>Bacteroidales</taxon>
        <taxon>Bacteroidaceae</taxon>
        <taxon>Bacteroides</taxon>
    </lineage>
</organism>
<keyword id="KW-0324">Glycolysis</keyword>
<keyword id="KW-0413">Isomerase</keyword>
<keyword id="KW-0464">Manganese</keyword>
<keyword id="KW-0479">Metal-binding</keyword>
<protein>
    <recommendedName>
        <fullName evidence="1">2,3-bisphosphoglycerate-independent phosphoglycerate mutase</fullName>
        <shortName evidence="1">BPG-independent PGAM</shortName>
        <shortName evidence="1">Phosphoglyceromutase</shortName>
        <shortName evidence="1">iPGM</shortName>
        <ecNumber evidence="1">5.4.2.12</ecNumber>
    </recommendedName>
</protein>
<name>GPMI_BACFN</name>
<comment type="function">
    <text evidence="1">Catalyzes the interconversion of 2-phosphoglycerate and 3-phosphoglycerate.</text>
</comment>
<comment type="catalytic activity">
    <reaction evidence="1">
        <text>(2R)-2-phosphoglycerate = (2R)-3-phosphoglycerate</text>
        <dbReference type="Rhea" id="RHEA:15901"/>
        <dbReference type="ChEBI" id="CHEBI:58272"/>
        <dbReference type="ChEBI" id="CHEBI:58289"/>
        <dbReference type="EC" id="5.4.2.12"/>
    </reaction>
</comment>
<comment type="cofactor">
    <cofactor evidence="1">
        <name>Mn(2+)</name>
        <dbReference type="ChEBI" id="CHEBI:29035"/>
    </cofactor>
    <text evidence="1">Binds 2 manganese ions per subunit.</text>
</comment>
<comment type="pathway">
    <text evidence="1">Carbohydrate degradation; glycolysis; pyruvate from D-glyceraldehyde 3-phosphate: step 3/5.</text>
</comment>
<comment type="subunit">
    <text evidence="1">Monomer.</text>
</comment>
<comment type="similarity">
    <text evidence="1">Belongs to the BPG-independent phosphoglycerate mutase family.</text>
</comment>
<proteinExistence type="inferred from homology"/>
<feature type="chain" id="PRO_0000212131" description="2,3-bisphosphoglycerate-independent phosphoglycerate mutase">
    <location>
        <begin position="1"/>
        <end position="504"/>
    </location>
</feature>
<feature type="active site" description="Phosphoserine intermediate" evidence="1">
    <location>
        <position position="61"/>
    </location>
</feature>
<feature type="binding site" evidence="1">
    <location>
        <position position="11"/>
    </location>
    <ligand>
        <name>Mn(2+)</name>
        <dbReference type="ChEBI" id="CHEBI:29035"/>
        <label>2</label>
    </ligand>
</feature>
<feature type="binding site" evidence="1">
    <location>
        <position position="61"/>
    </location>
    <ligand>
        <name>Mn(2+)</name>
        <dbReference type="ChEBI" id="CHEBI:29035"/>
        <label>2</label>
    </ligand>
</feature>
<feature type="binding site" evidence="1">
    <location>
        <position position="122"/>
    </location>
    <ligand>
        <name>substrate</name>
    </ligand>
</feature>
<feature type="binding site" evidence="1">
    <location>
        <begin position="152"/>
        <end position="153"/>
    </location>
    <ligand>
        <name>substrate</name>
    </ligand>
</feature>
<feature type="binding site" evidence="1">
    <location>
        <position position="183"/>
    </location>
    <ligand>
        <name>substrate</name>
    </ligand>
</feature>
<feature type="binding site" evidence="1">
    <location>
        <position position="189"/>
    </location>
    <ligand>
        <name>substrate</name>
    </ligand>
</feature>
<feature type="binding site" evidence="1">
    <location>
        <begin position="255"/>
        <end position="258"/>
    </location>
    <ligand>
        <name>substrate</name>
    </ligand>
</feature>
<feature type="binding site" evidence="1">
    <location>
        <position position="329"/>
    </location>
    <ligand>
        <name>substrate</name>
    </ligand>
</feature>
<feature type="binding site" evidence="1">
    <location>
        <position position="396"/>
    </location>
    <ligand>
        <name>Mn(2+)</name>
        <dbReference type="ChEBI" id="CHEBI:29035"/>
        <label>1</label>
    </ligand>
</feature>
<feature type="binding site" evidence="1">
    <location>
        <position position="400"/>
    </location>
    <ligand>
        <name>Mn(2+)</name>
        <dbReference type="ChEBI" id="CHEBI:29035"/>
        <label>1</label>
    </ligand>
</feature>
<feature type="binding site" evidence="1">
    <location>
        <position position="437"/>
    </location>
    <ligand>
        <name>Mn(2+)</name>
        <dbReference type="ChEBI" id="CHEBI:29035"/>
        <label>2</label>
    </ligand>
</feature>
<feature type="binding site" evidence="1">
    <location>
        <position position="438"/>
    </location>
    <ligand>
        <name>Mn(2+)</name>
        <dbReference type="ChEBI" id="CHEBI:29035"/>
        <label>2</label>
    </ligand>
</feature>
<feature type="binding site" evidence="1">
    <location>
        <position position="455"/>
    </location>
    <ligand>
        <name>Mn(2+)</name>
        <dbReference type="ChEBI" id="CHEBI:29035"/>
        <label>1</label>
    </ligand>
</feature>
<gene>
    <name evidence="1" type="primary">gpmI</name>
    <name type="synonym">pgmI</name>
    <name type="ordered locus">BF0241</name>
</gene>
<dbReference type="EC" id="5.4.2.12" evidence="1"/>
<dbReference type="EMBL" id="CR626927">
    <property type="protein sequence ID" value="CAH06016.1"/>
    <property type="molecule type" value="Genomic_DNA"/>
</dbReference>
<dbReference type="RefSeq" id="WP_010991949.1">
    <property type="nucleotide sequence ID" value="NC_003228.3"/>
</dbReference>
<dbReference type="SMR" id="Q5LIL0"/>
<dbReference type="PaxDb" id="272559-BF9343_0237"/>
<dbReference type="GeneID" id="60366854"/>
<dbReference type="KEGG" id="bfs:BF9343_0237"/>
<dbReference type="eggNOG" id="COG0696">
    <property type="taxonomic scope" value="Bacteria"/>
</dbReference>
<dbReference type="HOGENOM" id="CLU_026099_2_0_10"/>
<dbReference type="UniPathway" id="UPA00109">
    <property type="reaction ID" value="UER00186"/>
</dbReference>
<dbReference type="Proteomes" id="UP000006731">
    <property type="component" value="Chromosome"/>
</dbReference>
<dbReference type="GO" id="GO:0005829">
    <property type="term" value="C:cytosol"/>
    <property type="evidence" value="ECO:0007669"/>
    <property type="project" value="TreeGrafter"/>
</dbReference>
<dbReference type="GO" id="GO:0030145">
    <property type="term" value="F:manganese ion binding"/>
    <property type="evidence" value="ECO:0007669"/>
    <property type="project" value="UniProtKB-UniRule"/>
</dbReference>
<dbReference type="GO" id="GO:0004619">
    <property type="term" value="F:phosphoglycerate mutase activity"/>
    <property type="evidence" value="ECO:0007669"/>
    <property type="project" value="UniProtKB-EC"/>
</dbReference>
<dbReference type="GO" id="GO:0006007">
    <property type="term" value="P:glucose catabolic process"/>
    <property type="evidence" value="ECO:0007669"/>
    <property type="project" value="InterPro"/>
</dbReference>
<dbReference type="GO" id="GO:0006096">
    <property type="term" value="P:glycolytic process"/>
    <property type="evidence" value="ECO:0007669"/>
    <property type="project" value="UniProtKB-UniRule"/>
</dbReference>
<dbReference type="CDD" id="cd16010">
    <property type="entry name" value="iPGM"/>
    <property type="match status" value="1"/>
</dbReference>
<dbReference type="FunFam" id="3.40.1450.10:FF:000002">
    <property type="entry name" value="2,3-bisphosphoglycerate-independent phosphoglycerate mutase"/>
    <property type="match status" value="1"/>
</dbReference>
<dbReference type="FunFam" id="3.40.720.10:FF:000001">
    <property type="entry name" value="2,3-bisphosphoglycerate-independent phosphoglycerate mutase"/>
    <property type="match status" value="1"/>
</dbReference>
<dbReference type="Gene3D" id="3.40.720.10">
    <property type="entry name" value="Alkaline Phosphatase, subunit A"/>
    <property type="match status" value="1"/>
</dbReference>
<dbReference type="Gene3D" id="3.40.1450.10">
    <property type="entry name" value="BPG-independent phosphoglycerate mutase, domain B"/>
    <property type="match status" value="1"/>
</dbReference>
<dbReference type="HAMAP" id="MF_01038">
    <property type="entry name" value="GpmI"/>
    <property type="match status" value="1"/>
</dbReference>
<dbReference type="InterPro" id="IPR017850">
    <property type="entry name" value="Alkaline_phosphatase_core_sf"/>
</dbReference>
<dbReference type="InterPro" id="IPR011258">
    <property type="entry name" value="BPG-indep_PGM_N"/>
</dbReference>
<dbReference type="InterPro" id="IPR006124">
    <property type="entry name" value="Metalloenzyme"/>
</dbReference>
<dbReference type="InterPro" id="IPR036646">
    <property type="entry name" value="PGAM_B_sf"/>
</dbReference>
<dbReference type="InterPro" id="IPR005995">
    <property type="entry name" value="Pgm_bpd_ind"/>
</dbReference>
<dbReference type="NCBIfam" id="TIGR01307">
    <property type="entry name" value="pgm_bpd_ind"/>
    <property type="match status" value="1"/>
</dbReference>
<dbReference type="PANTHER" id="PTHR31637">
    <property type="entry name" value="2,3-BISPHOSPHOGLYCERATE-INDEPENDENT PHOSPHOGLYCERATE MUTASE"/>
    <property type="match status" value="1"/>
</dbReference>
<dbReference type="PANTHER" id="PTHR31637:SF0">
    <property type="entry name" value="2,3-BISPHOSPHOGLYCERATE-INDEPENDENT PHOSPHOGLYCERATE MUTASE"/>
    <property type="match status" value="1"/>
</dbReference>
<dbReference type="Pfam" id="PF06415">
    <property type="entry name" value="iPGM_N"/>
    <property type="match status" value="1"/>
</dbReference>
<dbReference type="Pfam" id="PF01676">
    <property type="entry name" value="Metalloenzyme"/>
    <property type="match status" value="1"/>
</dbReference>
<dbReference type="PIRSF" id="PIRSF001492">
    <property type="entry name" value="IPGAM"/>
    <property type="match status" value="1"/>
</dbReference>
<dbReference type="SUPFAM" id="SSF64158">
    <property type="entry name" value="2,3-Bisphosphoglycerate-independent phosphoglycerate mutase, substrate-binding domain"/>
    <property type="match status" value="1"/>
</dbReference>
<dbReference type="SUPFAM" id="SSF53649">
    <property type="entry name" value="Alkaline phosphatase-like"/>
    <property type="match status" value="1"/>
</dbReference>
<accession>Q5LIL0</accession>
<sequence length="504" mass="55661">MSKKALLMILDGWGLGDHGKDDVIFNTATPYWDYLMETYPHSQLQASGENVGLPDGQMGNSEVGHLNIGAGRVVYQDLVKINLSCRDNSILKNPEIVSAFSYAKENGKNVHFMGLTSDGGVHSSLDHLFKLCDIAKEYNIENTFVHCFMDGRDTDPKSGKGFIEQLEAHCAKSAGKVASIIGRYYAMDRDKRWERVKEAYDLLVNGIGKKATDMVQAMQESYDEGVTDEFIKPIVNAGVDGTIKEGDVVIFFNYRNDRAKELTVVLTQQDMPEAGMHTIPGLQYYCMTPYDASFKGVHILFDKENVVNTLGEYLAANGKKQLHIAETEKYAHVTFFFNGGRETPYDNEDRILVPSPKVATYDLKPEMSAYEVKDKLVAAINENKYDFIVVNYANGDMVGHTGIYEAIEKAVVAVDACVKDTIEAAKAQGYEAIIIADHGNADHALNEDGTPNTAHSLNPVPCVYVTENKEAKVADGRLADVAPTILHILDMVQPAEMTGCNLIK</sequence>
<reference key="1">
    <citation type="journal article" date="2005" name="Science">
        <title>Extensive DNA inversions in the B. fragilis genome control variable gene expression.</title>
        <authorList>
            <person name="Cerdeno-Tarraga A.-M."/>
            <person name="Patrick S."/>
            <person name="Crossman L.C."/>
            <person name="Blakely G."/>
            <person name="Abratt V."/>
            <person name="Lennard N."/>
            <person name="Poxton I."/>
            <person name="Duerden B."/>
            <person name="Harris B."/>
            <person name="Quail M.A."/>
            <person name="Barron A."/>
            <person name="Clark L."/>
            <person name="Corton C."/>
            <person name="Doggett J."/>
            <person name="Holden M.T.G."/>
            <person name="Larke N."/>
            <person name="Line A."/>
            <person name="Lord A."/>
            <person name="Norbertczak H."/>
            <person name="Ormond D."/>
            <person name="Price C."/>
            <person name="Rabbinowitsch E."/>
            <person name="Woodward J."/>
            <person name="Barrell B.G."/>
            <person name="Parkhill J."/>
        </authorList>
    </citation>
    <scope>NUCLEOTIDE SEQUENCE [LARGE SCALE GENOMIC DNA]</scope>
    <source>
        <strain>ATCC 25285 / DSM 2151 / CCUG 4856 / JCM 11019 / LMG 10263 / NCTC 9343 / Onslow / VPI 2553 / EN-2</strain>
    </source>
</reference>
<evidence type="ECO:0000255" key="1">
    <source>
        <dbReference type="HAMAP-Rule" id="MF_01038"/>
    </source>
</evidence>